<keyword id="KW-0997">Cell inner membrane</keyword>
<keyword id="KW-1003">Cell membrane</keyword>
<keyword id="KW-0472">Membrane</keyword>
<keyword id="KW-0653">Protein transport</keyword>
<keyword id="KW-1185">Reference proteome</keyword>
<keyword id="KW-0812">Transmembrane</keyword>
<keyword id="KW-1133">Transmembrane helix</keyword>
<keyword id="KW-0813">Transport</keyword>
<sequence>MIKSSAKHNDFGLTPDLTPLLDIIFIVMVFLLLTASVRLESLEVALPTTDSPVVNEVNKESITVNILATEPYWAIDGKPYLDWHNFSLALLESVQVDKRPVVIAADQGAEVQQLVKLLSFLQENGIQATQLLTEPSHS</sequence>
<name>EXBD1_VIBCH</name>
<evidence type="ECO:0000250" key="1"/>
<evidence type="ECO:0000255" key="2"/>
<evidence type="ECO:0000305" key="3"/>
<protein>
    <recommendedName>
        <fullName>Biopolymer transport protein exbD1</fullName>
    </recommendedName>
</protein>
<gene>
    <name type="primary">exbD1</name>
    <name type="synonym">exbD</name>
    <name type="ordered locus">VC_A0912</name>
</gene>
<proteinExistence type="inferred from homology"/>
<feature type="chain" id="PRO_0000129132" description="Biopolymer transport protein exbD1">
    <location>
        <begin position="1"/>
        <end position="138"/>
    </location>
</feature>
<feature type="topological domain" description="Cytoplasmic" evidence="2">
    <location>
        <begin position="1"/>
        <end position="16"/>
    </location>
</feature>
<feature type="transmembrane region" description="Helical" evidence="2">
    <location>
        <begin position="17"/>
        <end position="37"/>
    </location>
</feature>
<feature type="topological domain" description="Periplasmic" evidence="2">
    <location>
        <begin position="38"/>
        <end position="138"/>
    </location>
</feature>
<reference key="1">
    <citation type="journal article" date="1998" name="Mol. Microbiol.">
        <title>Vibrio cholerae iron transport: haem transport genes are linked to one of two sets of tonB, exbB, exbD genes.</title>
        <authorList>
            <person name="Occhino D.A."/>
            <person name="Wyckoff E.E."/>
            <person name="Henderson D.P."/>
            <person name="Wrona T.J."/>
            <person name="Payne S.M."/>
        </authorList>
    </citation>
    <scope>NUCLEOTIDE SEQUENCE [GENOMIC DNA]</scope>
    <source>
        <strain>Classical CA401</strain>
    </source>
</reference>
<reference key="2">
    <citation type="journal article" date="2000" name="Nature">
        <title>DNA sequence of both chromosomes of the cholera pathogen Vibrio cholerae.</title>
        <authorList>
            <person name="Heidelberg J.F."/>
            <person name="Eisen J.A."/>
            <person name="Nelson W.C."/>
            <person name="Clayton R.A."/>
            <person name="Gwinn M.L."/>
            <person name="Dodson R.J."/>
            <person name="Haft D.H."/>
            <person name="Hickey E.K."/>
            <person name="Peterson J.D."/>
            <person name="Umayam L.A."/>
            <person name="Gill S.R."/>
            <person name="Nelson K.E."/>
            <person name="Read T.D."/>
            <person name="Tettelin H."/>
            <person name="Richardson D.L."/>
            <person name="Ermolaeva M.D."/>
            <person name="Vamathevan J.J."/>
            <person name="Bass S."/>
            <person name="Qin H."/>
            <person name="Dragoi I."/>
            <person name="Sellers P."/>
            <person name="McDonald L.A."/>
            <person name="Utterback T.R."/>
            <person name="Fleischmann R.D."/>
            <person name="Nierman W.C."/>
            <person name="White O."/>
            <person name="Salzberg S.L."/>
            <person name="Smith H.O."/>
            <person name="Colwell R.R."/>
            <person name="Mekalanos J.J."/>
            <person name="Venter J.C."/>
            <person name="Fraser C.M."/>
        </authorList>
    </citation>
    <scope>NUCLEOTIDE SEQUENCE [LARGE SCALE GENOMIC DNA]</scope>
    <source>
        <strain>ATCC 39315 / El Tor Inaba N16961</strain>
    </source>
</reference>
<dbReference type="EMBL" id="AF016580">
    <property type="protein sequence ID" value="AAB94546.1"/>
    <property type="molecule type" value="Genomic_DNA"/>
</dbReference>
<dbReference type="EMBL" id="AE003853">
    <property type="protein sequence ID" value="AAF96809.1"/>
    <property type="molecule type" value="Genomic_DNA"/>
</dbReference>
<dbReference type="PIR" id="D82400">
    <property type="entry name" value="D82400"/>
</dbReference>
<dbReference type="RefSeq" id="NP_233297.1">
    <property type="nucleotide sequence ID" value="NC_002506.1"/>
</dbReference>
<dbReference type="RefSeq" id="WP_000597688.1">
    <property type="nucleotide sequence ID" value="NZ_LT906615.1"/>
</dbReference>
<dbReference type="SMR" id="O52044"/>
<dbReference type="STRING" id="243277.VC_A0912"/>
<dbReference type="DNASU" id="2612211"/>
<dbReference type="EnsemblBacteria" id="AAF96809">
    <property type="protein sequence ID" value="AAF96809"/>
    <property type="gene ID" value="VC_A0912"/>
</dbReference>
<dbReference type="KEGG" id="vch:VC_A0912"/>
<dbReference type="PATRIC" id="fig|243277.26.peg.3527"/>
<dbReference type="eggNOG" id="COG0848">
    <property type="taxonomic scope" value="Bacteria"/>
</dbReference>
<dbReference type="HOGENOM" id="CLU_085305_5_1_6"/>
<dbReference type="Proteomes" id="UP000000584">
    <property type="component" value="Chromosome 2"/>
</dbReference>
<dbReference type="GO" id="GO:0005886">
    <property type="term" value="C:plasma membrane"/>
    <property type="evidence" value="ECO:0000318"/>
    <property type="project" value="GO_Central"/>
</dbReference>
<dbReference type="GO" id="GO:0022857">
    <property type="term" value="F:transmembrane transporter activity"/>
    <property type="evidence" value="ECO:0007669"/>
    <property type="project" value="InterPro"/>
</dbReference>
<dbReference type="GO" id="GO:0015031">
    <property type="term" value="P:protein transport"/>
    <property type="evidence" value="ECO:0007669"/>
    <property type="project" value="UniProtKB-KW"/>
</dbReference>
<dbReference type="InterPro" id="IPR003400">
    <property type="entry name" value="ExbD"/>
</dbReference>
<dbReference type="PANTHER" id="PTHR30558:SF15">
    <property type="entry name" value="BIOPOLYMER TRANSPORT PROTEIN EXBD1"/>
    <property type="match status" value="1"/>
</dbReference>
<dbReference type="PANTHER" id="PTHR30558">
    <property type="entry name" value="EXBD MEMBRANE COMPONENT OF PMF-DRIVEN MACROMOLECULE IMPORT SYSTEM"/>
    <property type="match status" value="1"/>
</dbReference>
<dbReference type="Pfam" id="PF02472">
    <property type="entry name" value="ExbD"/>
    <property type="match status" value="1"/>
</dbReference>
<accession>O52044</accession>
<accession>Q9JPZ2</accession>
<organism>
    <name type="scientific">Vibrio cholerae serotype O1 (strain ATCC 39315 / El Tor Inaba N16961)</name>
    <dbReference type="NCBI Taxonomy" id="243277"/>
    <lineage>
        <taxon>Bacteria</taxon>
        <taxon>Pseudomonadati</taxon>
        <taxon>Pseudomonadota</taxon>
        <taxon>Gammaproteobacteria</taxon>
        <taxon>Vibrionales</taxon>
        <taxon>Vibrionaceae</taxon>
        <taxon>Vibrio</taxon>
    </lineage>
</organism>
<comment type="function">
    <text evidence="1">Involved in the TonB-dependent energy-dependent transport of various receptor-bound substrates.</text>
</comment>
<comment type="subunit">
    <text evidence="1">The accessory proteins ExbB and ExbD seem to form a complex with TonB.</text>
</comment>
<comment type="subcellular location">
    <subcellularLocation>
        <location evidence="3">Cell inner membrane</location>
        <topology evidence="3">Single-pass type II membrane protein</topology>
    </subcellularLocation>
</comment>
<comment type="similarity">
    <text evidence="3">Belongs to the ExbD/TolR family.</text>
</comment>